<evidence type="ECO:0000255" key="1">
    <source>
        <dbReference type="HAMAP-Rule" id="MF_00238"/>
    </source>
</evidence>
<reference key="1">
    <citation type="journal article" date="2007" name="PLoS ONE">
        <title>Analysis of the neurotoxin complex genes in Clostridium botulinum A1-A4 and B1 strains: BoNT/A3, /Ba4 and /B1 clusters are located within plasmids.</title>
        <authorList>
            <person name="Smith T.J."/>
            <person name="Hill K.K."/>
            <person name="Foley B.T."/>
            <person name="Detter J.C."/>
            <person name="Munk A.C."/>
            <person name="Bruce D.C."/>
            <person name="Doggett N.A."/>
            <person name="Smith L.A."/>
            <person name="Marks J.D."/>
            <person name="Xie G."/>
            <person name="Brettin T.S."/>
        </authorList>
    </citation>
    <scope>NUCLEOTIDE SEQUENCE [LARGE SCALE GENOMIC DNA]</scope>
    <source>
        <strain>Loch Maree / Type A3</strain>
    </source>
</reference>
<gene>
    <name evidence="1" type="primary">cmk</name>
    <name type="ordered locus">CLK_1189</name>
</gene>
<proteinExistence type="inferred from homology"/>
<accession>B1KSB1</accession>
<keyword id="KW-0067">ATP-binding</keyword>
<keyword id="KW-0963">Cytoplasm</keyword>
<keyword id="KW-0418">Kinase</keyword>
<keyword id="KW-0547">Nucleotide-binding</keyword>
<keyword id="KW-0808">Transferase</keyword>
<organism>
    <name type="scientific">Clostridium botulinum (strain Loch Maree / Type A3)</name>
    <dbReference type="NCBI Taxonomy" id="498214"/>
    <lineage>
        <taxon>Bacteria</taxon>
        <taxon>Bacillati</taxon>
        <taxon>Bacillota</taxon>
        <taxon>Clostridia</taxon>
        <taxon>Eubacteriales</taxon>
        <taxon>Clostridiaceae</taxon>
        <taxon>Clostridium</taxon>
    </lineage>
</organism>
<dbReference type="EC" id="2.7.4.25" evidence="1"/>
<dbReference type="EMBL" id="CP000962">
    <property type="protein sequence ID" value="ACA54877.1"/>
    <property type="molecule type" value="Genomic_DNA"/>
</dbReference>
<dbReference type="RefSeq" id="WP_012342926.1">
    <property type="nucleotide sequence ID" value="NC_010520.1"/>
</dbReference>
<dbReference type="SMR" id="B1KSB1"/>
<dbReference type="KEGG" id="cbl:CLK_1189"/>
<dbReference type="HOGENOM" id="CLU_079959_0_2_9"/>
<dbReference type="GO" id="GO:0005829">
    <property type="term" value="C:cytosol"/>
    <property type="evidence" value="ECO:0007669"/>
    <property type="project" value="TreeGrafter"/>
</dbReference>
<dbReference type="GO" id="GO:0005524">
    <property type="term" value="F:ATP binding"/>
    <property type="evidence" value="ECO:0007669"/>
    <property type="project" value="UniProtKB-UniRule"/>
</dbReference>
<dbReference type="GO" id="GO:0036430">
    <property type="term" value="F:CMP kinase activity"/>
    <property type="evidence" value="ECO:0007669"/>
    <property type="project" value="RHEA"/>
</dbReference>
<dbReference type="GO" id="GO:0036431">
    <property type="term" value="F:dCMP kinase activity"/>
    <property type="evidence" value="ECO:0007669"/>
    <property type="project" value="RHEA"/>
</dbReference>
<dbReference type="GO" id="GO:0015949">
    <property type="term" value="P:nucleobase-containing small molecule interconversion"/>
    <property type="evidence" value="ECO:0007669"/>
    <property type="project" value="TreeGrafter"/>
</dbReference>
<dbReference type="GO" id="GO:0006220">
    <property type="term" value="P:pyrimidine nucleotide metabolic process"/>
    <property type="evidence" value="ECO:0007669"/>
    <property type="project" value="UniProtKB-UniRule"/>
</dbReference>
<dbReference type="CDD" id="cd02020">
    <property type="entry name" value="CMPK"/>
    <property type="match status" value="1"/>
</dbReference>
<dbReference type="Gene3D" id="3.40.50.300">
    <property type="entry name" value="P-loop containing nucleotide triphosphate hydrolases"/>
    <property type="match status" value="1"/>
</dbReference>
<dbReference type="HAMAP" id="MF_00238">
    <property type="entry name" value="Cytidyl_kinase_type1"/>
    <property type="match status" value="1"/>
</dbReference>
<dbReference type="InterPro" id="IPR003136">
    <property type="entry name" value="Cytidylate_kin"/>
</dbReference>
<dbReference type="InterPro" id="IPR011994">
    <property type="entry name" value="Cytidylate_kinase_dom"/>
</dbReference>
<dbReference type="InterPro" id="IPR027417">
    <property type="entry name" value="P-loop_NTPase"/>
</dbReference>
<dbReference type="NCBIfam" id="TIGR00017">
    <property type="entry name" value="cmk"/>
    <property type="match status" value="1"/>
</dbReference>
<dbReference type="PANTHER" id="PTHR21299:SF2">
    <property type="entry name" value="CYTIDYLATE KINASE"/>
    <property type="match status" value="1"/>
</dbReference>
<dbReference type="PANTHER" id="PTHR21299">
    <property type="entry name" value="CYTIDYLATE KINASE/PANTOATE-BETA-ALANINE LIGASE"/>
    <property type="match status" value="1"/>
</dbReference>
<dbReference type="Pfam" id="PF02224">
    <property type="entry name" value="Cytidylate_kin"/>
    <property type="match status" value="1"/>
</dbReference>
<dbReference type="SUPFAM" id="SSF52540">
    <property type="entry name" value="P-loop containing nucleoside triphosphate hydrolases"/>
    <property type="match status" value="1"/>
</dbReference>
<sequence>MLNISIAIDGPAGAGKSTIAKIIGNKLNIMYINTGSMYRAVTLMALKNNIEPSDIESLKTLINSMDISFNGNNIIVNGKDLEEAIRMPIINNNVSKYAAVEEVRELLVSMQQNISQKYNVVMDGRDIGTVVLKDAPYKFFITASAEVRAKRRLKELKEKKINISFQDVLKEIKERDYIDSNRKVNPLKQSKDAILIDTSNFTIEEVVDKICSIIKRD</sequence>
<feature type="chain" id="PRO_1000125283" description="Cytidylate kinase">
    <location>
        <begin position="1"/>
        <end position="217"/>
    </location>
</feature>
<feature type="binding site" evidence="1">
    <location>
        <begin position="10"/>
        <end position="18"/>
    </location>
    <ligand>
        <name>ATP</name>
        <dbReference type="ChEBI" id="CHEBI:30616"/>
    </ligand>
</feature>
<name>KCY_CLOBM</name>
<protein>
    <recommendedName>
        <fullName evidence="1">Cytidylate kinase</fullName>
        <shortName evidence="1">CK</shortName>
        <ecNumber evidence="1">2.7.4.25</ecNumber>
    </recommendedName>
    <alternativeName>
        <fullName evidence="1">Cytidine monophosphate kinase</fullName>
        <shortName evidence="1">CMP kinase</shortName>
    </alternativeName>
</protein>
<comment type="catalytic activity">
    <reaction evidence="1">
        <text>CMP + ATP = CDP + ADP</text>
        <dbReference type="Rhea" id="RHEA:11600"/>
        <dbReference type="ChEBI" id="CHEBI:30616"/>
        <dbReference type="ChEBI" id="CHEBI:58069"/>
        <dbReference type="ChEBI" id="CHEBI:60377"/>
        <dbReference type="ChEBI" id="CHEBI:456216"/>
        <dbReference type="EC" id="2.7.4.25"/>
    </reaction>
</comment>
<comment type="catalytic activity">
    <reaction evidence="1">
        <text>dCMP + ATP = dCDP + ADP</text>
        <dbReference type="Rhea" id="RHEA:25094"/>
        <dbReference type="ChEBI" id="CHEBI:30616"/>
        <dbReference type="ChEBI" id="CHEBI:57566"/>
        <dbReference type="ChEBI" id="CHEBI:58593"/>
        <dbReference type="ChEBI" id="CHEBI:456216"/>
        <dbReference type="EC" id="2.7.4.25"/>
    </reaction>
</comment>
<comment type="subcellular location">
    <subcellularLocation>
        <location evidence="1">Cytoplasm</location>
    </subcellularLocation>
</comment>
<comment type="similarity">
    <text evidence="1">Belongs to the cytidylate kinase family. Type 1 subfamily.</text>
</comment>